<feature type="chain" id="PRO_0000405308" description="Serine/threonine-protein kinase VRK1">
    <location>
        <begin position="1"/>
        <end position="610"/>
    </location>
</feature>
<feature type="domain" description="Protein kinase" evidence="4">
    <location>
        <begin position="32"/>
        <end position="384"/>
    </location>
</feature>
<feature type="region of interest" description="Disordered" evidence="6">
    <location>
        <begin position="317"/>
        <end position="476"/>
    </location>
</feature>
<feature type="region of interest" description="Disordered" evidence="6">
    <location>
        <begin position="498"/>
        <end position="530"/>
    </location>
</feature>
<feature type="region of interest" description="Disordered" evidence="6">
    <location>
        <begin position="544"/>
        <end position="577"/>
    </location>
</feature>
<feature type="region of interest" description="Disordered" evidence="6">
    <location>
        <begin position="590"/>
        <end position="610"/>
    </location>
</feature>
<feature type="compositionally biased region" description="Basic and acidic residues" evidence="6">
    <location>
        <begin position="352"/>
        <end position="373"/>
    </location>
</feature>
<feature type="compositionally biased region" description="Acidic residues" evidence="6">
    <location>
        <begin position="388"/>
        <end position="397"/>
    </location>
</feature>
<feature type="compositionally biased region" description="Low complexity" evidence="6">
    <location>
        <begin position="447"/>
        <end position="458"/>
    </location>
</feature>
<feature type="compositionally biased region" description="Polar residues" evidence="6">
    <location>
        <begin position="465"/>
        <end position="474"/>
    </location>
</feature>
<feature type="compositionally biased region" description="Low complexity" evidence="6">
    <location>
        <begin position="502"/>
        <end position="517"/>
    </location>
</feature>
<feature type="compositionally biased region" description="Polar residues" evidence="6">
    <location>
        <begin position="550"/>
        <end position="559"/>
    </location>
</feature>
<feature type="compositionally biased region" description="Polar residues" evidence="6">
    <location>
        <begin position="594"/>
        <end position="610"/>
    </location>
</feature>
<feature type="active site" description="Proton acceptor" evidence="1 4 5">
    <location>
        <position position="167"/>
    </location>
</feature>
<feature type="binding site" evidence="1 4">
    <location>
        <begin position="38"/>
        <end position="46"/>
    </location>
    <ligand>
        <name>ATP</name>
        <dbReference type="ChEBI" id="CHEBI:30616"/>
    </ligand>
</feature>
<feature type="binding site" evidence="1 4">
    <location>
        <position position="61"/>
    </location>
    <ligand>
        <name>ATP</name>
        <dbReference type="ChEBI" id="CHEBI:30616"/>
    </ligand>
</feature>
<feature type="mutagenesis site" description="Acts as a suppressor of lem-4l(ax475) mutant." evidence="10">
    <original>P</original>
    <variation>L</variation>
    <location>
        <position position="69"/>
    </location>
</feature>
<evidence type="ECO:0000250" key="1">
    <source>
        <dbReference type="UniProtKB" id="P28523"/>
    </source>
</evidence>
<evidence type="ECO:0000250" key="2">
    <source>
        <dbReference type="UniProtKB" id="Q99986"/>
    </source>
</evidence>
<evidence type="ECO:0000255" key="3"/>
<evidence type="ECO:0000255" key="4">
    <source>
        <dbReference type="PROSITE-ProRule" id="PRU00159"/>
    </source>
</evidence>
<evidence type="ECO:0000255" key="5">
    <source>
        <dbReference type="PROSITE-ProRule" id="PRU10027"/>
    </source>
</evidence>
<evidence type="ECO:0000256" key="6">
    <source>
        <dbReference type="SAM" id="MobiDB-lite"/>
    </source>
</evidence>
<evidence type="ECO:0000269" key="7">
    <source>
    </source>
</evidence>
<evidence type="ECO:0000269" key="8">
    <source>
    </source>
</evidence>
<evidence type="ECO:0000269" key="9">
    <source>
    </source>
</evidence>
<evidence type="ECO:0000269" key="10">
    <source>
    </source>
</evidence>
<evidence type="ECO:0000303" key="11">
    <source>
    </source>
</evidence>
<evidence type="ECO:0000305" key="12"/>
<evidence type="ECO:0000312" key="13">
    <source>
        <dbReference type="WormBase" id="F28B12.3"/>
    </source>
</evidence>
<protein>
    <recommendedName>
        <fullName evidence="11">Serine/threonine-protein kinase VRK1</fullName>
        <ecNumber>2.7.11.1</ecNumber>
    </recommendedName>
    <alternativeName>
        <fullName evidence="11">Vaccinia-related kinase 1</fullName>
    </alternativeName>
</protein>
<name>VRK1_CAEEL</name>
<gene>
    <name evidence="13" type="primary">vrk-1</name>
    <name type="ORF">F28B12.3</name>
</gene>
<organism>
    <name type="scientific">Caenorhabditis elegans</name>
    <dbReference type="NCBI Taxonomy" id="6239"/>
    <lineage>
        <taxon>Eukaryota</taxon>
        <taxon>Metazoa</taxon>
        <taxon>Ecdysozoa</taxon>
        <taxon>Nematoda</taxon>
        <taxon>Chromadorea</taxon>
        <taxon>Rhabditida</taxon>
        <taxon>Rhabditina</taxon>
        <taxon>Rhabditomorpha</taxon>
        <taxon>Rhabditoidea</taxon>
        <taxon>Rhabditidae</taxon>
        <taxon>Peloderinae</taxon>
        <taxon>Caenorhabditis</taxon>
    </lineage>
</organism>
<comment type="function">
    <text evidence="7 8 9 10">Serine/threonine kinase that phosphorylates baf-1, thus regulating the association of baf-1 with chromatin and nuclear membrane proteins during nuclear envelope formation. May act through the egl-17 signaling pathway. Essential in hermaphrodites for formation of the vulva, uterus, and uterine seam cells and for development and maintenance of the somatic gonad and thus the germ line. Acts to prevent cep-1 from triggering an inappropriate cell cycle arrest, thereby promoting germ cell proliferation. Regulates anchor cell polarity and the timing of anchor cell invasion through the basement membranes separating vulval and somatic gonadal cells during the L3 larval stage.</text>
</comment>
<comment type="catalytic activity">
    <reaction evidence="7">
        <text>L-seryl-[protein] + ATP = O-phospho-L-seryl-[protein] + ADP + H(+)</text>
        <dbReference type="Rhea" id="RHEA:17989"/>
        <dbReference type="Rhea" id="RHEA-COMP:9863"/>
        <dbReference type="Rhea" id="RHEA-COMP:11604"/>
        <dbReference type="ChEBI" id="CHEBI:15378"/>
        <dbReference type="ChEBI" id="CHEBI:29999"/>
        <dbReference type="ChEBI" id="CHEBI:30616"/>
        <dbReference type="ChEBI" id="CHEBI:83421"/>
        <dbReference type="ChEBI" id="CHEBI:456216"/>
        <dbReference type="EC" id="2.7.11.1"/>
    </reaction>
</comment>
<comment type="catalytic activity">
    <reaction evidence="7">
        <text>L-threonyl-[protein] + ATP = O-phospho-L-threonyl-[protein] + ADP + H(+)</text>
        <dbReference type="Rhea" id="RHEA:46608"/>
        <dbReference type="Rhea" id="RHEA-COMP:11060"/>
        <dbReference type="Rhea" id="RHEA-COMP:11605"/>
        <dbReference type="ChEBI" id="CHEBI:15378"/>
        <dbReference type="ChEBI" id="CHEBI:30013"/>
        <dbReference type="ChEBI" id="CHEBI:30616"/>
        <dbReference type="ChEBI" id="CHEBI:61977"/>
        <dbReference type="ChEBI" id="CHEBI:456216"/>
        <dbReference type="EC" id="2.7.11.1"/>
    </reaction>
</comment>
<comment type="interaction">
    <interactant intactId="EBI-2414048">
        <id>Q19848</id>
    </interactant>
    <interactant intactId="EBI-2535603">
        <id>Q03565</id>
        <label>baf-1</label>
    </interactant>
    <organismsDiffer>false</organismsDiffer>
    <experiments>3</experiments>
</comment>
<comment type="interaction">
    <interactant intactId="EBI-2414048">
        <id>Q19848</id>
    </interactant>
    <interactant intactId="EBI-6258914">
        <id>H2KZB2</id>
        <label>lem-4</label>
    </interactant>
    <organismsDiffer>false</organismsDiffer>
    <experiments>2</experiments>
</comment>
<comment type="interaction">
    <interactant intactId="EBI-2414048">
        <id>Q19848</id>
    </interactant>
    <interactant intactId="EBI-1773621">
        <id>Q86XL3</id>
        <label>ANKLE2</label>
    </interactant>
    <organismsDiffer>true</organismsDiffer>
    <experiments>2</experiments>
</comment>
<comment type="subcellular location">
    <subcellularLocation>
        <location evidence="7 9">Nucleus</location>
    </subcellularLocation>
    <subcellularLocation>
        <location evidence="2">Cytoplasm</location>
    </subcellularLocation>
    <subcellularLocation>
        <location evidence="2">Nucleus</location>
        <location evidence="2">Cajal body</location>
    </subcellularLocation>
    <text evidence="7 9">Nuclear during interphase, accumulates at the nuclear rim in prophase and localizes to chromatin throughout metaphase, anaphase and telophase.</text>
</comment>
<comment type="tissue specificity">
    <text evidence="8 9">Present in germ cells at all stages of progression from the mitotic zone to mature oocytes, but not in maturing spermatids (at the protein level). Expressed in the ventral nerve cord and vulva cells.</text>
</comment>
<comment type="PTM">
    <text evidence="7">Autophosphorylates in vitro.</text>
</comment>
<comment type="disruption phenotype">
    <text evidence="7 8 9">Embryonically lethal. Homozygous animals produced by heterozygous hermaphrodites overcome this through maternal contribution. In these animals, defects in the formation of the vulva, uterus, and uterine seam cells and in development and maintenance of the somatic gonad and thus the germ line appear in the early L3 larval stage. Adults are sterile. Cells display mitotic defects, including impaired nuclear envelope formation and baf-1 delocalization.</text>
</comment>
<comment type="similarity">
    <text evidence="3">Belongs to the protein kinase superfamily. CK1 Ser/Thr protein kinase family. VRK subfamily.</text>
</comment>
<accession>Q19848</accession>
<dbReference type="EC" id="2.7.11.1"/>
<dbReference type="EMBL" id="FO080105">
    <property type="protein sequence ID" value="CCD61237.1"/>
    <property type="molecule type" value="Genomic_DNA"/>
</dbReference>
<dbReference type="PIR" id="T16194">
    <property type="entry name" value="T16194"/>
</dbReference>
<dbReference type="RefSeq" id="NP_495185.1">
    <property type="nucleotide sequence ID" value="NM_062784.8"/>
</dbReference>
<dbReference type="SMR" id="Q19848"/>
<dbReference type="BioGRID" id="39345">
    <property type="interactions" value="6"/>
</dbReference>
<dbReference type="FunCoup" id="Q19848">
    <property type="interactions" value="2252"/>
</dbReference>
<dbReference type="IntAct" id="Q19848">
    <property type="interactions" value="4"/>
</dbReference>
<dbReference type="STRING" id="6239.F28B12.3.1"/>
<dbReference type="PaxDb" id="6239-F28B12.3.1"/>
<dbReference type="PeptideAtlas" id="Q19848"/>
<dbReference type="EnsemblMetazoa" id="F28B12.3.1">
    <property type="protein sequence ID" value="F28B12.3.1"/>
    <property type="gene ID" value="WBGene00017895"/>
</dbReference>
<dbReference type="EnsemblMetazoa" id="F28B12.3.2">
    <property type="protein sequence ID" value="F28B12.3.2"/>
    <property type="gene ID" value="WBGene00017895"/>
</dbReference>
<dbReference type="GeneID" id="174004"/>
<dbReference type="KEGG" id="cel:CELE_F28B12.3"/>
<dbReference type="UCSC" id="F28B12.3.1">
    <property type="organism name" value="c. elegans"/>
</dbReference>
<dbReference type="AGR" id="WB:WBGene00017895"/>
<dbReference type="CTD" id="174004"/>
<dbReference type="WormBase" id="F28B12.3">
    <property type="protein sequence ID" value="CE02704"/>
    <property type="gene ID" value="WBGene00017895"/>
    <property type="gene designation" value="vrk-1"/>
</dbReference>
<dbReference type="eggNOG" id="KOG1164">
    <property type="taxonomic scope" value="Eukaryota"/>
</dbReference>
<dbReference type="GeneTree" id="ENSGT00940000168643"/>
<dbReference type="HOGENOM" id="CLU_019279_4_0_1"/>
<dbReference type="InParanoid" id="Q19848"/>
<dbReference type="OMA" id="MHSTGYV"/>
<dbReference type="OrthoDB" id="2687620at2759"/>
<dbReference type="PhylomeDB" id="Q19848"/>
<dbReference type="Reactome" id="R-CEL-2995383">
    <property type="pathway name" value="Initiation of Nuclear Envelope (NE) Reformation"/>
</dbReference>
<dbReference type="Reactome" id="R-CEL-9013405">
    <property type="pathway name" value="RHOD GTPase cycle"/>
</dbReference>
<dbReference type="SignaLink" id="Q19848"/>
<dbReference type="PRO" id="PR:Q19848"/>
<dbReference type="Proteomes" id="UP000001940">
    <property type="component" value="Chromosome II"/>
</dbReference>
<dbReference type="Bgee" id="WBGene00017895">
    <property type="expression patterns" value="Expressed in adult organism and 4 other cell types or tissues"/>
</dbReference>
<dbReference type="GO" id="GO:0015030">
    <property type="term" value="C:Cajal body"/>
    <property type="evidence" value="ECO:0007669"/>
    <property type="project" value="UniProtKB-SubCell"/>
</dbReference>
<dbReference type="GO" id="GO:0000785">
    <property type="term" value="C:chromatin"/>
    <property type="evidence" value="ECO:0000314"/>
    <property type="project" value="WormBase"/>
</dbReference>
<dbReference type="GO" id="GO:0005737">
    <property type="term" value="C:cytoplasm"/>
    <property type="evidence" value="ECO:0000318"/>
    <property type="project" value="GO_Central"/>
</dbReference>
<dbReference type="GO" id="GO:0005635">
    <property type="term" value="C:nuclear envelope"/>
    <property type="evidence" value="ECO:0000314"/>
    <property type="project" value="WormBase"/>
</dbReference>
<dbReference type="GO" id="GO:0005634">
    <property type="term" value="C:nucleus"/>
    <property type="evidence" value="ECO:0000314"/>
    <property type="project" value="WormBase"/>
</dbReference>
<dbReference type="GO" id="GO:0005524">
    <property type="term" value="F:ATP binding"/>
    <property type="evidence" value="ECO:0007669"/>
    <property type="project" value="UniProtKB-KW"/>
</dbReference>
<dbReference type="GO" id="GO:0004672">
    <property type="term" value="F:protein kinase activity"/>
    <property type="evidence" value="ECO:0000314"/>
    <property type="project" value="WormBase"/>
</dbReference>
<dbReference type="GO" id="GO:0106310">
    <property type="term" value="F:protein serine kinase activity"/>
    <property type="evidence" value="ECO:0007669"/>
    <property type="project" value="RHEA"/>
</dbReference>
<dbReference type="GO" id="GO:0004674">
    <property type="term" value="F:protein serine/threonine kinase activity"/>
    <property type="evidence" value="ECO:0000314"/>
    <property type="project" value="WormBase"/>
</dbReference>
<dbReference type="GO" id="GO:0001708">
    <property type="term" value="P:cell fate specification"/>
    <property type="evidence" value="ECO:0000315"/>
    <property type="project" value="WormBase"/>
</dbReference>
<dbReference type="GO" id="GO:0006974">
    <property type="term" value="P:DNA damage response"/>
    <property type="evidence" value="ECO:0000318"/>
    <property type="project" value="GO_Central"/>
</dbReference>
<dbReference type="GO" id="GO:0007163">
    <property type="term" value="P:establishment or maintenance of cell polarity"/>
    <property type="evidence" value="ECO:0000315"/>
    <property type="project" value="WormBase"/>
</dbReference>
<dbReference type="GO" id="GO:0008406">
    <property type="term" value="P:gonad development"/>
    <property type="evidence" value="ECO:0000315"/>
    <property type="project" value="WormBase"/>
</dbReference>
<dbReference type="GO" id="GO:0040036">
    <property type="term" value="P:regulation of fibroblast growth factor receptor signaling pathway"/>
    <property type="evidence" value="ECO:0000315"/>
    <property type="project" value="WormBase"/>
</dbReference>
<dbReference type="GO" id="GO:0022414">
    <property type="term" value="P:reproductive process"/>
    <property type="evidence" value="ECO:0000315"/>
    <property type="project" value="WormBase"/>
</dbReference>
<dbReference type="GO" id="GO:0007165">
    <property type="term" value="P:signal transduction"/>
    <property type="evidence" value="ECO:0000318"/>
    <property type="project" value="GO_Central"/>
</dbReference>
<dbReference type="FunFam" id="1.10.510.10:FF:001613">
    <property type="entry name" value="Serine/threonine-protein kinase VRK1"/>
    <property type="match status" value="1"/>
</dbReference>
<dbReference type="Gene3D" id="1.10.510.10">
    <property type="entry name" value="Transferase(Phosphotransferase) domain 1"/>
    <property type="match status" value="1"/>
</dbReference>
<dbReference type="InterPro" id="IPR050235">
    <property type="entry name" value="CK1_Ser-Thr_kinase"/>
</dbReference>
<dbReference type="InterPro" id="IPR011009">
    <property type="entry name" value="Kinase-like_dom_sf"/>
</dbReference>
<dbReference type="InterPro" id="IPR000719">
    <property type="entry name" value="Prot_kinase_dom"/>
</dbReference>
<dbReference type="InterPro" id="IPR008271">
    <property type="entry name" value="Ser/Thr_kinase_AS"/>
</dbReference>
<dbReference type="PANTHER" id="PTHR11909">
    <property type="entry name" value="CASEIN KINASE-RELATED"/>
    <property type="match status" value="1"/>
</dbReference>
<dbReference type="Pfam" id="PF00069">
    <property type="entry name" value="Pkinase"/>
    <property type="match status" value="1"/>
</dbReference>
<dbReference type="SMART" id="SM00220">
    <property type="entry name" value="S_TKc"/>
    <property type="match status" value="1"/>
</dbReference>
<dbReference type="SUPFAM" id="SSF56112">
    <property type="entry name" value="Protein kinase-like (PK-like)"/>
    <property type="match status" value="1"/>
</dbReference>
<dbReference type="PROSITE" id="PS50011">
    <property type="entry name" value="PROTEIN_KINASE_DOM"/>
    <property type="match status" value="1"/>
</dbReference>
<dbReference type="PROSITE" id="PS00108">
    <property type="entry name" value="PROTEIN_KINASE_ST"/>
    <property type="match status" value="1"/>
</dbReference>
<sequence length="610" mass="67355">MPPKKAPAKKLHELAAEVRVGHKINDISKKTFIVGKQFATGGFGRIHTCTEEGKSQQMVMKIEPSTNGPLLTEVVVFNRILKKELIESYKKKKKISWIGLPYLIANGYFTYESEKMRYMIIPKYATSLEAVRETNGGTLAMKDSLTVASCILDALEYLHESDYAHADVKAANILLEKQGVYSTAVLVDFGLAHRTTNNVDKPDKKRAHNGTCIFTSTDAHRGNNPSFRGDIEILAYNLMMWATGTLPWMALESSPEKVFDAKQKFIAGLPGTLQNVLKNESSAVVGCIASMFDISMKTNYTDKVDMGKLKKLVTDAIQKTSSDGKKTPTRQKKLAEEDKNAVTPKRSTRRLAVKEESDNKDNDEVEVKPEKKATPRKRTTRKAVEVNNDSDDNEEQYENPKSKSSRTQTKSKRAKEEDVDDEEEIIIPKSSRSRSKVQLSGEGSDVTTPSSAASTSRSRSIRLGLTSSTASSNKVAKKIEQKYKRLSMNKSSLVPVTISVASDKSPTTSTPSSSSGLRSKRKSSEDVGEGITLKTQVLITPAIKKAKTKSGISSATKASPTELRRVPGVRNFPKGRRSMIIKETSAKYKERLASRQTKPTFDDSSCSSEV</sequence>
<keyword id="KW-0067">ATP-binding</keyword>
<keyword id="KW-0963">Cytoplasm</keyword>
<keyword id="KW-0217">Developmental protein</keyword>
<keyword id="KW-0418">Kinase</keyword>
<keyword id="KW-0547">Nucleotide-binding</keyword>
<keyword id="KW-0539">Nucleus</keyword>
<keyword id="KW-0597">Phosphoprotein</keyword>
<keyword id="KW-1185">Reference proteome</keyword>
<keyword id="KW-0723">Serine/threonine-protein kinase</keyword>
<keyword id="KW-0808">Transferase</keyword>
<reference key="1">
    <citation type="journal article" date="1998" name="Science">
        <title>Genome sequence of the nematode C. elegans: a platform for investigating biology.</title>
        <authorList>
            <consortium name="The C. elegans sequencing consortium"/>
        </authorList>
    </citation>
    <scope>NUCLEOTIDE SEQUENCE [LARGE SCALE GENOMIC DNA]</scope>
    <source>
        <strain>Bristol N2</strain>
    </source>
</reference>
<reference evidence="12" key="2">
    <citation type="journal article" date="2007" name="EMBO J.">
        <title>Caenorhabditis elegans BAF-1 and its kinase VRK-1 participate directly in post-mitotic nuclear envelope assembly.</title>
        <authorList>
            <person name="Gorjanacz M."/>
            <person name="Klerkx E.P."/>
            <person name="Galy V."/>
            <person name="Santarella R."/>
            <person name="Lopez-Iglesias C."/>
            <person name="Askjaer P."/>
            <person name="Mattaj I.W."/>
        </authorList>
    </citation>
    <scope>FUNCTION</scope>
    <scope>SUBCELLULAR LOCATION</scope>
    <scope>AUTOPHOSPHORYLATION</scope>
    <scope>DISRUPTION PHENOTYPE</scope>
</reference>
<reference evidence="12" key="3">
    <citation type="journal article" date="2009" name="Dev. Biol.">
        <title>Protein kinase VRK-1 regulates cell invasion and EGL-17/FGF signaling in Caenorhabditis elegans.</title>
        <authorList>
            <person name="Klerkx E.P."/>
            <person name="Alarcon P."/>
            <person name="Waters K."/>
            <person name="Reinke V."/>
            <person name="Sternberg P.W."/>
            <person name="Askjaer P."/>
        </authorList>
    </citation>
    <scope>FUNCTION</scope>
    <scope>TISSUE SPECIFICITY</scope>
    <scope>DISRUPTION PHENOTYPE</scope>
    <source>
        <strain evidence="12">Bristol N2</strain>
    </source>
</reference>
<reference evidence="12" key="4">
    <citation type="journal article" date="2010" name="Dev. Biol.">
        <title>Genome-wide analysis of germ cell proliferation in C.elegans identifies VRK-1 as a key regulator of CEP-1/p53.</title>
        <authorList>
            <person name="Waters K."/>
            <person name="Yang A.Z."/>
            <person name="Reinke V."/>
        </authorList>
    </citation>
    <scope>FUNCTION</scope>
    <scope>SUBCELLULAR LOCATION</scope>
    <scope>TISSUE SPECIFICITY</scope>
    <scope>DISRUPTION PHENOTYPE</scope>
    <source>
        <strain evidence="12">Bristol N2</strain>
    </source>
</reference>
<reference key="5">
    <citation type="journal article" date="2012" name="Cell">
        <title>Coordination of kinase and phosphatase activities by Lem4 enables nuclear envelope reassembly during mitosis.</title>
        <authorList>
            <person name="Asencio C."/>
            <person name="Davidson I.F."/>
            <person name="Santarella-Mellwig R."/>
            <person name="Ly-Hartig T.B."/>
            <person name="Mall M."/>
            <person name="Wallenfang M.R."/>
            <person name="Mattaj I.W."/>
            <person name="Gorjanacz M."/>
        </authorList>
    </citation>
    <scope>FUNCTION</scope>
    <scope>MUTAGENESIS OF PRO-69</scope>
</reference>
<proteinExistence type="evidence at protein level"/>